<feature type="chain" id="PRO_0000322658" description="Dictomallein">
    <location>
        <begin position="1"/>
        <end position="687"/>
    </location>
</feature>
<feature type="domain" description="Peptidase M66">
    <location>
        <begin position="233"/>
        <end position="501"/>
    </location>
</feature>
<feature type="region of interest" description="Disordered" evidence="2">
    <location>
        <begin position="1"/>
        <end position="45"/>
    </location>
</feature>
<feature type="region of interest" description="Disordered" evidence="2">
    <location>
        <begin position="73"/>
        <end position="112"/>
    </location>
</feature>
<feature type="active site" evidence="1">
    <location>
        <position position="394"/>
    </location>
</feature>
<feature type="binding site" evidence="1">
    <location>
        <position position="393"/>
    </location>
    <ligand>
        <name>Zn(2+)</name>
        <dbReference type="ChEBI" id="CHEBI:29105"/>
        <note>catalytic</note>
    </ligand>
</feature>
<feature type="binding site" evidence="1">
    <location>
        <position position="397"/>
    </location>
    <ligand>
        <name>Zn(2+)</name>
        <dbReference type="ChEBI" id="CHEBI:29105"/>
        <note>catalytic</note>
    </ligand>
</feature>
<feature type="binding site" evidence="1">
    <location>
        <position position="403"/>
    </location>
    <ligand>
        <name>Zn(2+)</name>
        <dbReference type="ChEBI" id="CHEBI:29105"/>
        <note>catalytic</note>
    </ligand>
</feature>
<keyword id="KW-0378">Hydrolase</keyword>
<keyword id="KW-0479">Metal-binding</keyword>
<keyword id="KW-0482">Metalloprotease</keyword>
<keyword id="KW-0645">Protease</keyword>
<keyword id="KW-0862">Zinc</keyword>
<gene>
    <name type="primary">dtmL</name>
    <name type="ordered locus">BURPS668_A1784</name>
</gene>
<sequence length="687" mass="71308">MGNGERPPARRPDSSGSPPPAADAPAASNHPFSSHDTKHMTSRRLASRTAVAASLSALMLAACGGDDSANAPTAGGAAPLTPAVASPAGPTGSTPGSTPGATTAPAPSSTSAGQLSVDKMAFAQTHVVPSGGLSWTLPNASASLRPISRRDALVLVAIGQADAVQPVLEAWKDGAKLGALALSPPSALPPTESGGRAYANDRWSAVVPAAWMVPGVSFSVSASNYTSSVAQAPVFGTDADVQLTILPFYLFGADDTNSPPLSTTQAPDAATQQEIFAKWPTAELKVRTHPAGRFSLATVVVGPRADRTGAAQPAYPVTALDQQKDGYGVMSAMLTLITNMRTANGDGPLNDQYYAPLIALNSNGQFANLGGGLGGVGSGAAVGDHRYTGIFIHEQGHAFGLNHAGDEYAKGAYPYAGGSLSGSVWGYDPNHREFLDVLVPTTASSYAKCASSHQLDAQGRCYKQDPMQGGAGDQSSGYKFATFSDYNTGRMQAWIASRVLADPASSTGYSKWDSAAQARAPYTPTTDNNGLYGVNQNLPVQAGVPVHTIVVSFSKAGSAGASYIYPPFSYTGNLIATFDPTSAADRQAITVDKGTYPWYCKGTGCDYTLRVTYADGSQTYRVLQGGFRAWWTPTVDDANATNPLSGSSFRVWAINVPGDKRIGKIELLDTPMVWNGMPANPTVLLSR</sequence>
<evidence type="ECO:0000250" key="1"/>
<evidence type="ECO:0000256" key="2">
    <source>
        <dbReference type="SAM" id="MobiDB-lite"/>
    </source>
</evidence>
<evidence type="ECO:0000305" key="3"/>
<comment type="cofactor">
    <cofactor evidence="3">
        <name>Zn(2+)</name>
        <dbReference type="ChEBI" id="CHEBI:29105"/>
    </cofactor>
    <text evidence="3">Binds 1 zinc ion per subunit.</text>
</comment>
<comment type="similarity">
    <text evidence="3">Belongs to the dictomallein family.</text>
</comment>
<reference key="1">
    <citation type="journal article" date="2010" name="Genome Biol. Evol.">
        <title>Continuing evolution of Burkholderia mallei through genome reduction and large-scale rearrangements.</title>
        <authorList>
            <person name="Losada L."/>
            <person name="Ronning C.M."/>
            <person name="DeShazer D."/>
            <person name="Woods D."/>
            <person name="Fedorova N."/>
            <person name="Kim H.S."/>
            <person name="Shabalina S.A."/>
            <person name="Pearson T.R."/>
            <person name="Brinkac L."/>
            <person name="Tan P."/>
            <person name="Nandi T."/>
            <person name="Crabtree J."/>
            <person name="Badger J."/>
            <person name="Beckstrom-Sternberg S."/>
            <person name="Saqib M."/>
            <person name="Schutzer S.E."/>
            <person name="Keim P."/>
            <person name="Nierman W.C."/>
        </authorList>
    </citation>
    <scope>NUCLEOTIDE SEQUENCE [LARGE SCALE GENOMIC DNA]</scope>
    <source>
        <strain>668</strain>
    </source>
</reference>
<proteinExistence type="inferred from homology"/>
<dbReference type="EC" id="3.4.24.-"/>
<dbReference type="EMBL" id="CP000571">
    <property type="protein sequence ID" value="ABN85870.2"/>
    <property type="molecule type" value="Genomic_DNA"/>
</dbReference>
<dbReference type="RefSeq" id="WP_004536510.1">
    <property type="nucleotide sequence ID" value="NC_009075.1"/>
</dbReference>
<dbReference type="SMR" id="A3NKA8"/>
<dbReference type="MEROPS" id="M67.A13"/>
<dbReference type="KEGG" id="bpd:BURPS668_A1784"/>
<dbReference type="HOGENOM" id="CLU_451780_0_0_4"/>
<dbReference type="GO" id="GO:0046872">
    <property type="term" value="F:metal ion binding"/>
    <property type="evidence" value="ECO:0007669"/>
    <property type="project" value="UniProtKB-KW"/>
</dbReference>
<dbReference type="GO" id="GO:0004222">
    <property type="term" value="F:metalloendopeptidase activity"/>
    <property type="evidence" value="ECO:0007669"/>
    <property type="project" value="InterPro"/>
</dbReference>
<dbReference type="GO" id="GO:0006508">
    <property type="term" value="P:proteolysis"/>
    <property type="evidence" value="ECO:0007669"/>
    <property type="project" value="UniProtKB-KW"/>
</dbReference>
<dbReference type="InterPro" id="IPR051256">
    <property type="entry name" value="Dictomallein"/>
</dbReference>
<dbReference type="InterPro" id="IPR019503">
    <property type="entry name" value="Peptidase_M66_dom"/>
</dbReference>
<dbReference type="PANTHER" id="PTHR39540">
    <property type="match status" value="1"/>
</dbReference>
<dbReference type="PANTHER" id="PTHR39540:SF1">
    <property type="entry name" value="DICTOMALLEIN-1-RELATED"/>
    <property type="match status" value="1"/>
</dbReference>
<dbReference type="Pfam" id="PF10462">
    <property type="entry name" value="Peptidase_M66"/>
    <property type="match status" value="1"/>
</dbReference>
<dbReference type="SUPFAM" id="SSF55486">
    <property type="entry name" value="Metalloproteases ('zincins'), catalytic domain"/>
    <property type="match status" value="1"/>
</dbReference>
<dbReference type="PROSITE" id="PS51694">
    <property type="entry name" value="PEPTIDASE_M66"/>
    <property type="match status" value="1"/>
</dbReference>
<name>DTML_BURP6</name>
<organism>
    <name type="scientific">Burkholderia pseudomallei (strain 668)</name>
    <dbReference type="NCBI Taxonomy" id="320373"/>
    <lineage>
        <taxon>Bacteria</taxon>
        <taxon>Pseudomonadati</taxon>
        <taxon>Pseudomonadota</taxon>
        <taxon>Betaproteobacteria</taxon>
        <taxon>Burkholderiales</taxon>
        <taxon>Burkholderiaceae</taxon>
        <taxon>Burkholderia</taxon>
        <taxon>pseudomallei group</taxon>
    </lineage>
</organism>
<protein>
    <recommendedName>
        <fullName>Dictomallein</fullName>
        <ecNumber>3.4.24.-</ecNumber>
    </recommendedName>
</protein>
<accession>A3NKA8</accession>